<dbReference type="EMBL" id="CR380959">
    <property type="protein sequence ID" value="CAG62588.1"/>
    <property type="molecule type" value="Genomic_DNA"/>
</dbReference>
<dbReference type="RefSeq" id="XP_449612.1">
    <property type="nucleotide sequence ID" value="XM_449612.1"/>
</dbReference>
<dbReference type="SMR" id="Q6FJI2"/>
<dbReference type="FunCoup" id="Q6FJI2">
    <property type="interactions" value="1012"/>
</dbReference>
<dbReference type="STRING" id="284593.Q6FJI2"/>
<dbReference type="EnsemblFungi" id="CAGL0M06105g-T">
    <property type="protein sequence ID" value="CAGL0M06105g-T-p1"/>
    <property type="gene ID" value="CAGL0M06105g"/>
</dbReference>
<dbReference type="KEGG" id="cgr:2891660"/>
<dbReference type="CGD" id="CAL0137323">
    <property type="gene designation" value="CAGL0M06105g"/>
</dbReference>
<dbReference type="VEuPathDB" id="FungiDB:CAGL0M06105g"/>
<dbReference type="eggNOG" id="KOG2834">
    <property type="taxonomic scope" value="Eukaryota"/>
</dbReference>
<dbReference type="HOGENOM" id="CLU_017172_0_0_1"/>
<dbReference type="InParanoid" id="Q6FJI2"/>
<dbReference type="OMA" id="KWSRTGR"/>
<dbReference type="Proteomes" id="UP000002428">
    <property type="component" value="Chromosome M"/>
</dbReference>
<dbReference type="GO" id="GO:0005789">
    <property type="term" value="C:endoplasmic reticulum membrane"/>
    <property type="evidence" value="ECO:0007669"/>
    <property type="project" value="UniProtKB-SubCell"/>
</dbReference>
<dbReference type="GO" id="GO:0031965">
    <property type="term" value="C:nuclear membrane"/>
    <property type="evidence" value="ECO:0007669"/>
    <property type="project" value="UniProtKB-SubCell"/>
</dbReference>
<dbReference type="GO" id="GO:0048471">
    <property type="term" value="C:perinuclear region of cytoplasm"/>
    <property type="evidence" value="ECO:0007669"/>
    <property type="project" value="UniProtKB-SubCell"/>
</dbReference>
<dbReference type="GO" id="GO:0043130">
    <property type="term" value="F:ubiquitin binding"/>
    <property type="evidence" value="ECO:0007669"/>
    <property type="project" value="TreeGrafter"/>
</dbReference>
<dbReference type="GO" id="GO:0031625">
    <property type="term" value="F:ubiquitin protein ligase binding"/>
    <property type="evidence" value="ECO:0007669"/>
    <property type="project" value="TreeGrafter"/>
</dbReference>
<dbReference type="GO" id="GO:0051028">
    <property type="term" value="P:mRNA transport"/>
    <property type="evidence" value="ECO:0007669"/>
    <property type="project" value="UniProtKB-KW"/>
</dbReference>
<dbReference type="GO" id="GO:0015031">
    <property type="term" value="P:protein transport"/>
    <property type="evidence" value="ECO:0007669"/>
    <property type="project" value="UniProtKB-KW"/>
</dbReference>
<dbReference type="GO" id="GO:0006511">
    <property type="term" value="P:ubiquitin-dependent protein catabolic process"/>
    <property type="evidence" value="ECO:0007669"/>
    <property type="project" value="InterPro"/>
</dbReference>
<dbReference type="CDD" id="cd08061">
    <property type="entry name" value="MPN_NPL4"/>
    <property type="match status" value="1"/>
</dbReference>
<dbReference type="Gene3D" id="3.10.20.90">
    <property type="entry name" value="Phosphatidylinositol 3-kinase Catalytic Subunit, Chain A, domain 1"/>
    <property type="match status" value="1"/>
</dbReference>
<dbReference type="InterPro" id="IPR037518">
    <property type="entry name" value="MPN"/>
</dbReference>
<dbReference type="InterPro" id="IPR016563">
    <property type="entry name" value="Npl4"/>
</dbReference>
<dbReference type="InterPro" id="IPR007717">
    <property type="entry name" value="NPL4_C"/>
</dbReference>
<dbReference type="InterPro" id="IPR024682">
    <property type="entry name" value="Npl4_Ub-like_dom"/>
</dbReference>
<dbReference type="InterPro" id="IPR007716">
    <property type="entry name" value="NPL4_Zn-bd_put"/>
</dbReference>
<dbReference type="InterPro" id="IPR029071">
    <property type="entry name" value="Ubiquitin-like_domsf"/>
</dbReference>
<dbReference type="PANTHER" id="PTHR12710">
    <property type="entry name" value="NUCLEAR PROTEIN LOCALIZATION 4"/>
    <property type="match status" value="1"/>
</dbReference>
<dbReference type="PANTHER" id="PTHR12710:SF0">
    <property type="entry name" value="NUCLEAR PROTEIN LOCALIZATION PROTEIN 4 HOMOLOG"/>
    <property type="match status" value="1"/>
</dbReference>
<dbReference type="Pfam" id="PF05021">
    <property type="entry name" value="NPL4"/>
    <property type="match status" value="1"/>
</dbReference>
<dbReference type="Pfam" id="PF11543">
    <property type="entry name" value="UN_NPL4"/>
    <property type="match status" value="1"/>
</dbReference>
<dbReference type="Pfam" id="PF05020">
    <property type="entry name" value="zf-NPL4"/>
    <property type="match status" value="1"/>
</dbReference>
<dbReference type="PIRSF" id="PIRSF010052">
    <property type="entry name" value="Polyub_prc_Npl4"/>
    <property type="match status" value="1"/>
</dbReference>
<dbReference type="SUPFAM" id="SSF54236">
    <property type="entry name" value="Ubiquitin-like"/>
    <property type="match status" value="1"/>
</dbReference>
<dbReference type="PROSITE" id="PS50249">
    <property type="entry name" value="MPN"/>
    <property type="match status" value="1"/>
</dbReference>
<gene>
    <name type="primary">NPL4</name>
    <name type="ordered locus">CAGL0M06105g</name>
</gene>
<evidence type="ECO:0000250" key="1"/>
<evidence type="ECO:0000255" key="2">
    <source>
        <dbReference type="PROSITE-ProRule" id="PRU01182"/>
    </source>
</evidence>
<evidence type="ECO:0000256" key="3">
    <source>
        <dbReference type="SAM" id="MobiDB-lite"/>
    </source>
</evidence>
<evidence type="ECO:0000305" key="4"/>
<feature type="chain" id="PRO_0000339440" description="Nuclear protein localization protein 4">
    <location>
        <begin position="1"/>
        <end position="580"/>
    </location>
</feature>
<feature type="domain" description="MPN" evidence="2">
    <location>
        <begin position="238"/>
        <end position="378"/>
    </location>
</feature>
<feature type="region of interest" description="Disordered" evidence="3">
    <location>
        <begin position="86"/>
        <end position="113"/>
    </location>
</feature>
<feature type="compositionally biased region" description="Polar residues" evidence="3">
    <location>
        <begin position="86"/>
        <end position="104"/>
    </location>
</feature>
<proteinExistence type="inferred from homology"/>
<name>NPL4_CANGA</name>
<keyword id="KW-0963">Cytoplasm</keyword>
<keyword id="KW-0256">Endoplasmic reticulum</keyword>
<keyword id="KW-0472">Membrane</keyword>
<keyword id="KW-0509">mRNA transport</keyword>
<keyword id="KW-0539">Nucleus</keyword>
<keyword id="KW-0653">Protein transport</keyword>
<keyword id="KW-1185">Reference proteome</keyword>
<keyword id="KW-0811">Translocation</keyword>
<keyword id="KW-0813">Transport</keyword>
<protein>
    <recommendedName>
        <fullName>Nuclear protein localization protein 4</fullName>
    </recommendedName>
</protein>
<comment type="function">
    <text evidence="1">Involved in the import of nuclear-targeted proteins into the nucleus and the export of poly(A) RNA out of the nucleus. Has a role in the endoplasmic reticulum-associated degradation (ERAD) pathway (By similarity).</text>
</comment>
<comment type="subcellular location">
    <subcellularLocation>
        <location evidence="1">Cytoplasm</location>
        <location evidence="1">Perinuclear region</location>
    </subcellularLocation>
    <subcellularLocation>
        <location evidence="1">Endoplasmic reticulum membrane</location>
        <topology evidence="1">Peripheral membrane protein</topology>
        <orientation evidence="1">Cytoplasmic side</orientation>
    </subcellularLocation>
    <subcellularLocation>
        <location evidence="1">Nucleus membrane</location>
        <topology evidence="1">Peripheral membrane protein</topology>
        <orientation evidence="1">Cytoplasmic side</orientation>
    </subcellularLocation>
    <text evidence="1">Localizes mainly at the nuclear periphery and the endoplasmic reticulum membrane.</text>
</comment>
<comment type="similarity">
    <text evidence="4">Belongs to the NPL4 family.</text>
</comment>
<sequence>MIIRFRSPVGMHRVRCEGSETLGQVLPQLQTILNEHGITPRAIELGKEANGKDKTNVESLLEKTIEALGFRHGDIVYVHYQVDSSETKGSANDNNGSVAVNIPNNLVPGKSQKADELEVDKELEKLDGLIPRQKTKLCKHGDRGMCEYCSPLPPWDANYANENNIKHISFHAYLKKLNESTNKRESGSSYIAPLSQPNFKINKHCTNGHEPWPKGICSKCQPSAITLQQQEFRMVDHVEFQSSELINQFIEFWRASGTQRFAYLYGKYEKYDATPLGIKACVHAIYEPPQHDEQDGITMDMEQVTQELNTIDLLAKEMGLLRVGMIFSDLTDAGNGDGTVLCKRHKDSFFLSSLETIMAAQHQTRHPNVSKFSEQGIFSSKFVTCVVSGNLKEEIDIASYQVSIDAEALVSADMIGGSTHPSMAYINDTTEDRYVPEIFYMKKNEYGLTVKENAKPAFPVDYLIVSLTHGFPKDEDTTTQLFNSVTGFPWSNRQAMGYSQDYHELKRYLHSTAASGNFNDLHDKLANFHLLLYIHSLQILSQEEWELLVKGALSQDYQEPLYKLSASPGWQTLLMIIESA</sequence>
<organism>
    <name type="scientific">Candida glabrata (strain ATCC 2001 / BCRC 20586 / JCM 3761 / NBRC 0622 / NRRL Y-65 / CBS 138)</name>
    <name type="common">Yeast</name>
    <name type="synonym">Nakaseomyces glabratus</name>
    <dbReference type="NCBI Taxonomy" id="284593"/>
    <lineage>
        <taxon>Eukaryota</taxon>
        <taxon>Fungi</taxon>
        <taxon>Dikarya</taxon>
        <taxon>Ascomycota</taxon>
        <taxon>Saccharomycotina</taxon>
        <taxon>Saccharomycetes</taxon>
        <taxon>Saccharomycetales</taxon>
        <taxon>Saccharomycetaceae</taxon>
        <taxon>Nakaseomyces</taxon>
    </lineage>
</organism>
<accession>Q6FJI2</accession>
<reference key="1">
    <citation type="journal article" date="2004" name="Nature">
        <title>Genome evolution in yeasts.</title>
        <authorList>
            <person name="Dujon B."/>
            <person name="Sherman D."/>
            <person name="Fischer G."/>
            <person name="Durrens P."/>
            <person name="Casaregola S."/>
            <person name="Lafontaine I."/>
            <person name="de Montigny J."/>
            <person name="Marck C."/>
            <person name="Neuveglise C."/>
            <person name="Talla E."/>
            <person name="Goffard N."/>
            <person name="Frangeul L."/>
            <person name="Aigle M."/>
            <person name="Anthouard V."/>
            <person name="Babour A."/>
            <person name="Barbe V."/>
            <person name="Barnay S."/>
            <person name="Blanchin S."/>
            <person name="Beckerich J.-M."/>
            <person name="Beyne E."/>
            <person name="Bleykasten C."/>
            <person name="Boisrame A."/>
            <person name="Boyer J."/>
            <person name="Cattolico L."/>
            <person name="Confanioleri F."/>
            <person name="de Daruvar A."/>
            <person name="Despons L."/>
            <person name="Fabre E."/>
            <person name="Fairhead C."/>
            <person name="Ferry-Dumazet H."/>
            <person name="Groppi A."/>
            <person name="Hantraye F."/>
            <person name="Hennequin C."/>
            <person name="Jauniaux N."/>
            <person name="Joyet P."/>
            <person name="Kachouri R."/>
            <person name="Kerrest A."/>
            <person name="Koszul R."/>
            <person name="Lemaire M."/>
            <person name="Lesur I."/>
            <person name="Ma L."/>
            <person name="Muller H."/>
            <person name="Nicaud J.-M."/>
            <person name="Nikolski M."/>
            <person name="Oztas S."/>
            <person name="Ozier-Kalogeropoulos O."/>
            <person name="Pellenz S."/>
            <person name="Potier S."/>
            <person name="Richard G.-F."/>
            <person name="Straub M.-L."/>
            <person name="Suleau A."/>
            <person name="Swennen D."/>
            <person name="Tekaia F."/>
            <person name="Wesolowski-Louvel M."/>
            <person name="Westhof E."/>
            <person name="Wirth B."/>
            <person name="Zeniou-Meyer M."/>
            <person name="Zivanovic Y."/>
            <person name="Bolotin-Fukuhara M."/>
            <person name="Thierry A."/>
            <person name="Bouchier C."/>
            <person name="Caudron B."/>
            <person name="Scarpelli C."/>
            <person name="Gaillardin C."/>
            <person name="Weissenbach J."/>
            <person name="Wincker P."/>
            <person name="Souciet J.-L."/>
        </authorList>
    </citation>
    <scope>NUCLEOTIDE SEQUENCE [LARGE SCALE GENOMIC DNA]</scope>
    <source>
        <strain>ATCC 2001 / BCRC 20586 / JCM 3761 / NBRC 0622 / NRRL Y-65 / CBS 138</strain>
    </source>
</reference>